<protein>
    <recommendedName>
        <fullName evidence="1">Transcriptional repressor NrdR</fullName>
    </recommendedName>
</protein>
<feature type="chain" id="PRO_1000080772" description="Transcriptional repressor NrdR">
    <location>
        <begin position="1"/>
        <end position="170"/>
    </location>
</feature>
<feature type="domain" description="ATP-cone" evidence="1">
    <location>
        <begin position="49"/>
        <end position="139"/>
    </location>
</feature>
<feature type="zinc finger region" evidence="1">
    <location>
        <begin position="3"/>
        <end position="34"/>
    </location>
</feature>
<feature type="region of interest" description="Disordered" evidence="2">
    <location>
        <begin position="151"/>
        <end position="170"/>
    </location>
</feature>
<feature type="compositionally biased region" description="Basic and acidic residues" evidence="2">
    <location>
        <begin position="160"/>
        <end position="170"/>
    </location>
</feature>
<sequence>MRCPFCGTQDTKVVDSRLVSEGAQVRRRRTCIHCQERFTTFEVAELQMPKLIKSDGSREAFDEDKLRNGIIKAIEKRPVSIEAVETAITRIKEKMQATGERELPSRWTGEAVMEELQRLDQVAYVRFASVYRSFKDISEFREAIDRLESHSVSIPKSKKTAPESKKEDQA</sequence>
<proteinExistence type="inferred from homology"/>
<name>NRDR_MARMS</name>
<evidence type="ECO:0000255" key="1">
    <source>
        <dbReference type="HAMAP-Rule" id="MF_00440"/>
    </source>
</evidence>
<evidence type="ECO:0000256" key="2">
    <source>
        <dbReference type="SAM" id="MobiDB-lite"/>
    </source>
</evidence>
<reference key="1">
    <citation type="submission" date="2007-06" db="EMBL/GenBank/DDBJ databases">
        <title>Complete sequence of Marinomonas sp. MWYL1.</title>
        <authorList>
            <consortium name="US DOE Joint Genome Institute"/>
            <person name="Copeland A."/>
            <person name="Lucas S."/>
            <person name="Lapidus A."/>
            <person name="Barry K."/>
            <person name="Glavina del Rio T."/>
            <person name="Dalin E."/>
            <person name="Tice H."/>
            <person name="Pitluck S."/>
            <person name="Kiss H."/>
            <person name="Brettin T."/>
            <person name="Bruce D."/>
            <person name="Detter J.C."/>
            <person name="Han C."/>
            <person name="Schmutz J."/>
            <person name="Larimer F."/>
            <person name="Land M."/>
            <person name="Hauser L."/>
            <person name="Kyrpides N."/>
            <person name="Kim E."/>
            <person name="Johnston A.W.B."/>
            <person name="Todd J.D."/>
            <person name="Rogers R."/>
            <person name="Wexler M."/>
            <person name="Bond P.L."/>
            <person name="Li Y."/>
            <person name="Richardson P."/>
        </authorList>
    </citation>
    <scope>NUCLEOTIDE SEQUENCE [LARGE SCALE GENOMIC DNA]</scope>
    <source>
        <strain>MWYL1</strain>
    </source>
</reference>
<gene>
    <name evidence="1" type="primary">nrdR</name>
    <name type="ordered locus">Mmwyl1_4051</name>
</gene>
<dbReference type="EMBL" id="CP000749">
    <property type="protein sequence ID" value="ABR72947.1"/>
    <property type="molecule type" value="Genomic_DNA"/>
</dbReference>
<dbReference type="SMR" id="A6W2L8"/>
<dbReference type="STRING" id="400668.Mmwyl1_4051"/>
<dbReference type="KEGG" id="mmw:Mmwyl1_4051"/>
<dbReference type="eggNOG" id="COG1327">
    <property type="taxonomic scope" value="Bacteria"/>
</dbReference>
<dbReference type="HOGENOM" id="CLU_108412_0_0_6"/>
<dbReference type="OrthoDB" id="9807461at2"/>
<dbReference type="GO" id="GO:0005524">
    <property type="term" value="F:ATP binding"/>
    <property type="evidence" value="ECO:0007669"/>
    <property type="project" value="UniProtKB-KW"/>
</dbReference>
<dbReference type="GO" id="GO:0003677">
    <property type="term" value="F:DNA binding"/>
    <property type="evidence" value="ECO:0007669"/>
    <property type="project" value="UniProtKB-KW"/>
</dbReference>
<dbReference type="GO" id="GO:0008270">
    <property type="term" value="F:zinc ion binding"/>
    <property type="evidence" value="ECO:0007669"/>
    <property type="project" value="UniProtKB-UniRule"/>
</dbReference>
<dbReference type="GO" id="GO:0045892">
    <property type="term" value="P:negative regulation of DNA-templated transcription"/>
    <property type="evidence" value="ECO:0007669"/>
    <property type="project" value="UniProtKB-UniRule"/>
</dbReference>
<dbReference type="HAMAP" id="MF_00440">
    <property type="entry name" value="NrdR"/>
    <property type="match status" value="1"/>
</dbReference>
<dbReference type="InterPro" id="IPR005144">
    <property type="entry name" value="ATP-cone_dom"/>
</dbReference>
<dbReference type="InterPro" id="IPR055173">
    <property type="entry name" value="NrdR-like_N"/>
</dbReference>
<dbReference type="InterPro" id="IPR003796">
    <property type="entry name" value="RNR_NrdR-like"/>
</dbReference>
<dbReference type="NCBIfam" id="TIGR00244">
    <property type="entry name" value="transcriptional regulator NrdR"/>
    <property type="match status" value="1"/>
</dbReference>
<dbReference type="PANTHER" id="PTHR30455">
    <property type="entry name" value="TRANSCRIPTIONAL REPRESSOR NRDR"/>
    <property type="match status" value="1"/>
</dbReference>
<dbReference type="PANTHER" id="PTHR30455:SF2">
    <property type="entry name" value="TRANSCRIPTIONAL REPRESSOR NRDR"/>
    <property type="match status" value="1"/>
</dbReference>
<dbReference type="Pfam" id="PF03477">
    <property type="entry name" value="ATP-cone"/>
    <property type="match status" value="1"/>
</dbReference>
<dbReference type="Pfam" id="PF22811">
    <property type="entry name" value="Zn_ribbon_NrdR"/>
    <property type="match status" value="1"/>
</dbReference>
<dbReference type="PROSITE" id="PS51161">
    <property type="entry name" value="ATP_CONE"/>
    <property type="match status" value="1"/>
</dbReference>
<accession>A6W2L8</accession>
<organism>
    <name type="scientific">Marinomonas sp. (strain MWYL1)</name>
    <dbReference type="NCBI Taxonomy" id="400668"/>
    <lineage>
        <taxon>Bacteria</taxon>
        <taxon>Pseudomonadati</taxon>
        <taxon>Pseudomonadota</taxon>
        <taxon>Gammaproteobacteria</taxon>
        <taxon>Oceanospirillales</taxon>
        <taxon>Oceanospirillaceae</taxon>
        <taxon>Marinomonas</taxon>
    </lineage>
</organism>
<comment type="function">
    <text evidence="1">Negatively regulates transcription of bacterial ribonucleotide reductase nrd genes and operons by binding to NrdR-boxes.</text>
</comment>
<comment type="cofactor">
    <cofactor evidence="1">
        <name>Zn(2+)</name>
        <dbReference type="ChEBI" id="CHEBI:29105"/>
    </cofactor>
    <text evidence="1">Binds 1 zinc ion.</text>
</comment>
<comment type="similarity">
    <text evidence="1">Belongs to the NrdR family.</text>
</comment>
<keyword id="KW-0067">ATP-binding</keyword>
<keyword id="KW-0238">DNA-binding</keyword>
<keyword id="KW-0479">Metal-binding</keyword>
<keyword id="KW-0547">Nucleotide-binding</keyword>
<keyword id="KW-0678">Repressor</keyword>
<keyword id="KW-0804">Transcription</keyword>
<keyword id="KW-0805">Transcription regulation</keyword>
<keyword id="KW-0862">Zinc</keyword>
<keyword id="KW-0863">Zinc-finger</keyword>